<feature type="chain" id="PRO_0000426896" description="Probable cation-transporting ATPase I">
    <location>
        <begin position="1"/>
        <end position="1625"/>
    </location>
</feature>
<feature type="transmembrane region" description="Helical" evidence="2">
    <location>
        <begin position="148"/>
        <end position="168"/>
    </location>
</feature>
<feature type="transmembrane region" description="Helical" evidence="2">
    <location>
        <begin position="177"/>
        <end position="197"/>
    </location>
</feature>
<feature type="transmembrane region" description="Helical" evidence="2">
    <location>
        <begin position="358"/>
        <end position="378"/>
    </location>
</feature>
<feature type="transmembrane region" description="Helical" evidence="2">
    <location>
        <begin position="637"/>
        <end position="657"/>
    </location>
</feature>
<feature type="transmembrane region" description="Helical" evidence="2">
    <location>
        <begin position="673"/>
        <end position="693"/>
    </location>
</feature>
<feature type="transmembrane region" description="Helical" evidence="2">
    <location>
        <begin position="778"/>
        <end position="798"/>
    </location>
</feature>
<feature type="transmembrane region" description="Helical" evidence="2">
    <location>
        <begin position="968"/>
        <end position="988"/>
    </location>
</feature>
<feature type="transmembrane region" description="Helical" evidence="2">
    <location>
        <begin position="997"/>
        <end position="1017"/>
    </location>
</feature>
<feature type="transmembrane region" description="Helical" evidence="2">
    <location>
        <begin position="1401"/>
        <end position="1421"/>
    </location>
</feature>
<feature type="transmembrane region" description="Helical" evidence="2">
    <location>
        <begin position="1432"/>
        <end position="1452"/>
    </location>
</feature>
<feature type="transmembrane region" description="Helical" evidence="2">
    <location>
        <begin position="1547"/>
        <end position="1567"/>
    </location>
</feature>
<feature type="active site" description="4-aspartylphosphate intermediate" evidence="1">
    <location>
        <position position="1053"/>
    </location>
</feature>
<feature type="binding site" evidence="1">
    <location>
        <position position="1340"/>
    </location>
    <ligand>
        <name>Mg(2+)</name>
        <dbReference type="ChEBI" id="CHEBI:18420"/>
    </ligand>
</feature>
<feature type="binding site" evidence="1">
    <location>
        <position position="1344"/>
    </location>
    <ligand>
        <name>Mg(2+)</name>
        <dbReference type="ChEBI" id="CHEBI:18420"/>
    </ligand>
</feature>
<organism>
    <name type="scientific">Mycobacterium tuberculosis (strain CDC 1551 / Oshkosh)</name>
    <dbReference type="NCBI Taxonomy" id="83331"/>
    <lineage>
        <taxon>Bacteria</taxon>
        <taxon>Bacillati</taxon>
        <taxon>Actinomycetota</taxon>
        <taxon>Actinomycetes</taxon>
        <taxon>Mycobacteriales</taxon>
        <taxon>Mycobacteriaceae</taxon>
        <taxon>Mycobacterium</taxon>
        <taxon>Mycobacterium tuberculosis complex</taxon>
    </lineage>
</organism>
<reference key="1">
    <citation type="journal article" date="2002" name="J. Bacteriol.">
        <title>Whole-genome comparison of Mycobacterium tuberculosis clinical and laboratory strains.</title>
        <authorList>
            <person name="Fleischmann R.D."/>
            <person name="Alland D."/>
            <person name="Eisen J.A."/>
            <person name="Carpenter L."/>
            <person name="White O."/>
            <person name="Peterson J.D."/>
            <person name="DeBoy R.T."/>
            <person name="Dodson R.J."/>
            <person name="Gwinn M.L."/>
            <person name="Haft D.H."/>
            <person name="Hickey E.K."/>
            <person name="Kolonay J.F."/>
            <person name="Nelson W.C."/>
            <person name="Umayam L.A."/>
            <person name="Ermolaeva M.D."/>
            <person name="Salzberg S.L."/>
            <person name="Delcher A."/>
            <person name="Utterback T.R."/>
            <person name="Weidman J.F."/>
            <person name="Khouri H.M."/>
            <person name="Gill J."/>
            <person name="Mikula A."/>
            <person name="Bishai W."/>
            <person name="Jacobs W.R. Jr."/>
            <person name="Venter J.C."/>
            <person name="Fraser C.M."/>
        </authorList>
    </citation>
    <scope>NUCLEOTIDE SEQUENCE [LARGE SCALE GENOMIC DNA]</scope>
    <source>
        <strain>CDC 1551 / Oshkosh</strain>
    </source>
</reference>
<gene>
    <name type="primary">ctpI</name>
    <name type="ordered locus">MT0116</name>
</gene>
<evidence type="ECO:0000250" key="1"/>
<evidence type="ECO:0000255" key="2"/>
<evidence type="ECO:0000305" key="3"/>
<protein>
    <recommendedName>
        <fullName>Probable cation-transporting ATPase I</fullName>
        <ecNumber>7.2.2.-</ecNumber>
    </recommendedName>
</protein>
<name>CTPI_MYCTO</name>
<dbReference type="EC" id="7.2.2.-"/>
<dbReference type="EMBL" id="AE000516">
    <property type="protein sequence ID" value="AAK44338.1"/>
    <property type="molecule type" value="Genomic_DNA"/>
</dbReference>
<dbReference type="PIR" id="C70752">
    <property type="entry name" value="C70752"/>
</dbReference>
<dbReference type="SMR" id="P9WPS4"/>
<dbReference type="KEGG" id="mtc:MT0116"/>
<dbReference type="PATRIC" id="fig|83331.31.peg.121"/>
<dbReference type="HOGENOM" id="CLU_002360_0_1_11"/>
<dbReference type="Proteomes" id="UP000001020">
    <property type="component" value="Chromosome"/>
</dbReference>
<dbReference type="GO" id="GO:0043231">
    <property type="term" value="C:intracellular membrane-bounded organelle"/>
    <property type="evidence" value="ECO:0007669"/>
    <property type="project" value="TreeGrafter"/>
</dbReference>
<dbReference type="GO" id="GO:0005886">
    <property type="term" value="C:plasma membrane"/>
    <property type="evidence" value="ECO:0007669"/>
    <property type="project" value="UniProtKB-SubCell"/>
</dbReference>
<dbReference type="GO" id="GO:0005524">
    <property type="term" value="F:ATP binding"/>
    <property type="evidence" value="ECO:0007669"/>
    <property type="project" value="UniProtKB-KW"/>
</dbReference>
<dbReference type="GO" id="GO:0016887">
    <property type="term" value="F:ATP hydrolysis activity"/>
    <property type="evidence" value="ECO:0007669"/>
    <property type="project" value="InterPro"/>
</dbReference>
<dbReference type="GO" id="GO:0046872">
    <property type="term" value="F:metal ion binding"/>
    <property type="evidence" value="ECO:0007669"/>
    <property type="project" value="UniProtKB-KW"/>
</dbReference>
<dbReference type="GO" id="GO:0005388">
    <property type="term" value="F:P-type calcium transporter activity"/>
    <property type="evidence" value="ECO:0007669"/>
    <property type="project" value="TreeGrafter"/>
</dbReference>
<dbReference type="CDD" id="cd07539">
    <property type="entry name" value="P-type_ATPase"/>
    <property type="match status" value="1"/>
</dbReference>
<dbReference type="FunFam" id="2.70.150.10:FF:000082">
    <property type="entry name" value="Cation-transporter ATPase I CtpI"/>
    <property type="match status" value="1"/>
</dbReference>
<dbReference type="Gene3D" id="3.40.1110.10">
    <property type="entry name" value="Calcium-transporting ATPase, cytoplasmic domain N"/>
    <property type="match status" value="1"/>
</dbReference>
<dbReference type="Gene3D" id="2.70.150.10">
    <property type="entry name" value="Calcium-transporting ATPase, cytoplasmic transduction domain A"/>
    <property type="match status" value="1"/>
</dbReference>
<dbReference type="Gene3D" id="1.20.1110.10">
    <property type="entry name" value="Calcium-transporting ATPase, transmembrane domain"/>
    <property type="match status" value="1"/>
</dbReference>
<dbReference type="Gene3D" id="3.40.50.1000">
    <property type="entry name" value="HAD superfamily/HAD-like"/>
    <property type="match status" value="1"/>
</dbReference>
<dbReference type="InterPro" id="IPR006068">
    <property type="entry name" value="ATPase_P-typ_cation-transptr_C"/>
</dbReference>
<dbReference type="InterPro" id="IPR023299">
    <property type="entry name" value="ATPase_P-typ_cyto_dom_N"/>
</dbReference>
<dbReference type="InterPro" id="IPR018303">
    <property type="entry name" value="ATPase_P-typ_P_site"/>
</dbReference>
<dbReference type="InterPro" id="IPR023298">
    <property type="entry name" value="ATPase_P-typ_TM_dom_sf"/>
</dbReference>
<dbReference type="InterPro" id="IPR008250">
    <property type="entry name" value="ATPase_P-typ_transduc_dom_A_sf"/>
</dbReference>
<dbReference type="InterPro" id="IPR036412">
    <property type="entry name" value="HAD-like_sf"/>
</dbReference>
<dbReference type="InterPro" id="IPR023214">
    <property type="entry name" value="HAD_sf"/>
</dbReference>
<dbReference type="InterPro" id="IPR001757">
    <property type="entry name" value="P_typ_ATPase"/>
</dbReference>
<dbReference type="InterPro" id="IPR044492">
    <property type="entry name" value="P_typ_ATPase_HD_dom"/>
</dbReference>
<dbReference type="NCBIfam" id="TIGR01494">
    <property type="entry name" value="ATPase_P-type"/>
    <property type="match status" value="2"/>
</dbReference>
<dbReference type="PANTHER" id="PTHR24093">
    <property type="entry name" value="CATION TRANSPORTING ATPASE"/>
    <property type="match status" value="1"/>
</dbReference>
<dbReference type="PANTHER" id="PTHR24093:SF513">
    <property type="entry name" value="CATION-TRANSPORTING ATPASE I-RELATED"/>
    <property type="match status" value="1"/>
</dbReference>
<dbReference type="Pfam" id="PF00689">
    <property type="entry name" value="Cation_ATPase_C"/>
    <property type="match status" value="1"/>
</dbReference>
<dbReference type="Pfam" id="PF00122">
    <property type="entry name" value="E1-E2_ATPase"/>
    <property type="match status" value="1"/>
</dbReference>
<dbReference type="Pfam" id="PF00702">
    <property type="entry name" value="Hydrolase"/>
    <property type="match status" value="1"/>
</dbReference>
<dbReference type="PRINTS" id="PR00119">
    <property type="entry name" value="CATATPASE"/>
</dbReference>
<dbReference type="PRINTS" id="PR00120">
    <property type="entry name" value="HATPASE"/>
</dbReference>
<dbReference type="SFLD" id="SFLDG00002">
    <property type="entry name" value="C1.7:_P-type_atpase_like"/>
    <property type="match status" value="1"/>
</dbReference>
<dbReference type="SFLD" id="SFLDF00027">
    <property type="entry name" value="p-type_atpase"/>
    <property type="match status" value="1"/>
</dbReference>
<dbReference type="SUPFAM" id="SSF81653">
    <property type="entry name" value="Calcium ATPase, transduction domain A"/>
    <property type="match status" value="1"/>
</dbReference>
<dbReference type="SUPFAM" id="SSF81665">
    <property type="entry name" value="Calcium ATPase, transmembrane domain M"/>
    <property type="match status" value="1"/>
</dbReference>
<dbReference type="SUPFAM" id="SSF56784">
    <property type="entry name" value="HAD-like"/>
    <property type="match status" value="1"/>
</dbReference>
<dbReference type="PROSITE" id="PS00154">
    <property type="entry name" value="ATPASE_E1_E2"/>
    <property type="match status" value="1"/>
</dbReference>
<sequence>MKIPGVATVLGGVTNGVAQTVRAGARLPGSAAAAVQTLASPVLELTGPVVQSVVQTTGRAIGVRGSHNESPDGMTPPVRWRSGRRVHFDLDPLLPFPRWHEHAAMVEEPVRRIPGVAEAHVEGSLGRLVVELEPDADSDIAVDEVRDVVSAVAADIFLAGSVSSPNSAPFADPGNPLAILVPLTAAAMDLVAMGATVTGWVARLPAAPQTTRALAALINHQPRMVSLMESRLGRVGTDIALAATTAAANGLTQSLGTPLLDLVQRSLQISEAAAHRRVWRDREPALASPRRPQAPVVPIISSAGAKSQEPRHSWAAAAAGEASHVVVGGSIDAAIDTAKGSRAGPVEQYVNQAANGSLIAAASALVAGGGTEDAAGAILAGVPRAAHMGRQAFAAVLGRGLANTGQLVLDPGALRRLDRVRVVVIDGAALRGDNRAVLHAQGDEPGWDDDRVYEVADALLHGEQAPEPDPDELPATGARLRWAPAQGPSATPAQGLEHADLVVDGQCVGSVDVGWEVDPYAIPLLQTAHRTGARVVLRHVAGTEDLSASVGSTHPPGTPLLKLVRELRADRGPVLLITAVHRDFASTDTLAALAIADVGVALDDPRGATPWTADLITGTDLAAAVRILSALPVARAASESAVHLAQGGTTLAGLLLVTGEQDKTTNPASFRRWLNPVNAAAATALVSGMWSAAKVLRMPDPTPQPLTAWHALDPEIVYSRLAGGSRPLAVEPGIPAWRRILDDLSYEPVMAPLRGPARTLAQLAVATRHELADPLTPILAVGAAASAIVGSNIDALLVAGVMTVNAITGGVQRLRAEAAAAELFAEQDQLVRRVVVPAVATTRRRLEAARHATRTATVSAKSLRVGDVIDLAAPEVVPADARLLVAEDLEVDESFLTGESLPVDKQVDPVAVNDPDRASMLFEGSTIVAGHARAIVVATGVGTAAHRAISAVADVETAAGVQARLRELTSKVLPMTLAGGAAVTALALLRRASLRQAVADGVAIAVAAVPEGLPLVATLSQLAAAQRLTARGALVRSPRTIEALGRVDTICFDKTGTLTENRLRVVCALPSSTAAERDPLPQTTDAPSAEVLRAAARASTQPHNGEGHAHATDEAILAAASALAGSLSSQGDSEWVVLAEVPFESSRGYAAAIGRVGTDGIPMLMLKGAPETILPRCRLADPGVDHEHAESVVRHLAEQGLRVLAVAQRTWDNGTTHDDETDADAVDAVAHDLELIGYVGLADTARSSSRPLIEALLDAERNVVLITGDHPITARAIARQLGLPADARVVTGAELAVLDEEAHAKLAADMQVFARVSPEQKVQIVAALQRCGRVTAMVGDGANDAAAIRMADVGIGVSGRGSSAARGAADIVLTDDDLGVLLDALVEGRSMWAGVRDAVTILVGGNVGEVLFTVIGTAFGAGRAPVGTRQLLLVNLLTDMFPALAVAVTSQFAEPDDAEYPTDDAAERAQREHRRAVLIGPTPSLDAPLLRQIVNRGVVTAAGATAAWAIGRWTPGTERRTATMGLTALVMTQLAQTLLTRRHSPLVIATALGSAGVLVGIIQTPVISHFFGCTPLGPVAWTGVFSATAGATAVSALAPKWLASTVGVVQPDERPDDAEDSDAGG</sequence>
<accession>P9WPS4</accession>
<accession>L0T5J4</accession>
<accession>Q10900</accession>
<keyword id="KW-0067">ATP-binding</keyword>
<keyword id="KW-1003">Cell membrane</keyword>
<keyword id="KW-0460">Magnesium</keyword>
<keyword id="KW-0472">Membrane</keyword>
<keyword id="KW-0479">Metal-binding</keyword>
<keyword id="KW-0547">Nucleotide-binding</keyword>
<keyword id="KW-0597">Phosphoprotein</keyword>
<keyword id="KW-1185">Reference proteome</keyword>
<keyword id="KW-1278">Translocase</keyword>
<keyword id="KW-0812">Transmembrane</keyword>
<keyword id="KW-1133">Transmembrane helix</keyword>
<proteinExistence type="inferred from homology"/>
<comment type="catalytic activity">
    <reaction>
        <text>ATP + H2O = ADP + phosphate + H(+)</text>
        <dbReference type="Rhea" id="RHEA:13065"/>
        <dbReference type="ChEBI" id="CHEBI:15377"/>
        <dbReference type="ChEBI" id="CHEBI:15378"/>
        <dbReference type="ChEBI" id="CHEBI:30616"/>
        <dbReference type="ChEBI" id="CHEBI:43474"/>
        <dbReference type="ChEBI" id="CHEBI:456216"/>
    </reaction>
</comment>
<comment type="subcellular location">
    <subcellularLocation>
        <location evidence="3">Cell membrane</location>
        <topology evidence="3">Multi-pass membrane protein</topology>
    </subcellularLocation>
</comment>
<comment type="similarity">
    <text evidence="3">Belongs to the cation transport ATPase (P-type) (TC 3.A.3) family.</text>
</comment>